<feature type="chain" id="PRO_0000137452" description="Translation initiation factor 2 subunit gamma">
    <location>
        <begin position="1"/>
        <end position="414"/>
    </location>
</feature>
<feature type="domain" description="tr-type G" evidence="1">
    <location>
        <begin position="7"/>
        <end position="204"/>
    </location>
</feature>
<feature type="region of interest" description="G1" evidence="1">
    <location>
        <begin position="16"/>
        <end position="23"/>
    </location>
</feature>
<feature type="region of interest" description="G2" evidence="1">
    <location>
        <begin position="44"/>
        <end position="48"/>
    </location>
</feature>
<feature type="region of interest" description="G3" evidence="1">
    <location>
        <begin position="91"/>
        <end position="94"/>
    </location>
</feature>
<feature type="region of interest" description="G4" evidence="1">
    <location>
        <begin position="147"/>
        <end position="150"/>
    </location>
</feature>
<feature type="region of interest" description="G5" evidence="1">
    <location>
        <begin position="182"/>
        <end position="184"/>
    </location>
</feature>
<feature type="binding site" evidence="1">
    <location>
        <begin position="19"/>
        <end position="24"/>
    </location>
    <ligand>
        <name>GTP</name>
        <dbReference type="ChEBI" id="CHEBI:37565"/>
    </ligand>
</feature>
<feature type="binding site" evidence="1">
    <location>
        <position position="19"/>
    </location>
    <ligand>
        <name>Mg(2+)</name>
        <dbReference type="ChEBI" id="CHEBI:18420"/>
        <label>2</label>
    </ligand>
</feature>
<feature type="binding site" evidence="1">
    <location>
        <position position="23"/>
    </location>
    <ligand>
        <name>Mg(2+)</name>
        <dbReference type="ChEBI" id="CHEBI:18420"/>
        <label>1</label>
    </ligand>
</feature>
<feature type="binding site" evidence="1">
    <location>
        <position position="44"/>
    </location>
    <ligand>
        <name>Mg(2+)</name>
        <dbReference type="ChEBI" id="CHEBI:18420"/>
        <label>2</label>
    </ligand>
</feature>
<feature type="binding site" evidence="1">
    <location>
        <position position="46"/>
    </location>
    <ligand>
        <name>Mg(2+)</name>
        <dbReference type="ChEBI" id="CHEBI:18420"/>
        <label>1</label>
    </ligand>
</feature>
<feature type="binding site" evidence="1">
    <location>
        <begin position="147"/>
        <end position="150"/>
    </location>
    <ligand>
        <name>GTP</name>
        <dbReference type="ChEBI" id="CHEBI:37565"/>
    </ligand>
</feature>
<feature type="binding site" evidence="1">
    <location>
        <begin position="182"/>
        <end position="184"/>
    </location>
    <ligand>
        <name>GTP</name>
        <dbReference type="ChEBI" id="CHEBI:37565"/>
    </ligand>
</feature>
<feature type="sequence conflict" description="In Ref. 1; BAA35082." evidence="2" ref="1">
    <original>E</original>
    <variation>D</variation>
    <location>
        <position position="64"/>
    </location>
</feature>
<feature type="sequence conflict" description="In Ref. 1; BAA35082." evidence="2" ref="1">
    <original>QVAGPPGS</original>
    <variation>PGRRGRPAG</variation>
    <location>
        <begin position="312"/>
        <end position="319"/>
    </location>
</feature>
<feature type="sequence conflict" description="In Ref. 1; BAA35082." evidence="2" ref="1">
    <original>DG</original>
    <variation>AA</variation>
    <location>
        <begin position="342"/>
        <end position="343"/>
    </location>
</feature>
<feature type="sequence conflict" description="In Ref. 1; BAA35082." evidence="2" ref="1">
    <original>L</original>
    <variation>P</variation>
    <location>
        <position position="357"/>
    </location>
</feature>
<feature type="sequence conflict" description="In Ref. 1; BAA35082." evidence="2" ref="1">
    <original>SA</original>
    <variation>RP</variation>
    <location>
        <begin position="370"/>
        <end position="371"/>
    </location>
</feature>
<feature type="sequence conflict" description="In Ref. 1; BAA35082." evidence="2" ref="1">
    <location>
        <position position="390"/>
    </location>
</feature>
<reference key="1">
    <citation type="journal article" date="1998" name="Biochem. Mol. Biol. Int.">
        <title>Cloning and sequencing of the homologues of both the bacterial and eukaryotic initiation factor genes (hIF-2 and heIF-2gamma) from archaeal Halobacterium halobium.</title>
        <authorList>
            <person name="Hasegawa Y."/>
            <person name="Sawaoka N."/>
            <person name="Kado N."/>
            <person name="Ochi M."/>
            <person name="Itoh T."/>
        </authorList>
    </citation>
    <scope>NUCLEOTIDE SEQUENCE [GENOMIC DNA]</scope>
    <source>
        <strain>A9</strain>
    </source>
</reference>
<reference key="2">
    <citation type="journal article" date="2000" name="Proc. Natl. Acad. Sci. U.S.A.">
        <title>Genome sequence of Halobacterium species NRC-1.</title>
        <authorList>
            <person name="Ng W.V."/>
            <person name="Kennedy S.P."/>
            <person name="Mahairas G.G."/>
            <person name="Berquist B."/>
            <person name="Pan M."/>
            <person name="Shukla H.D."/>
            <person name="Lasky S.R."/>
            <person name="Baliga N.S."/>
            <person name="Thorsson V."/>
            <person name="Sbrogna J."/>
            <person name="Swartzell S."/>
            <person name="Weir D."/>
            <person name="Hall J."/>
            <person name="Dahl T.A."/>
            <person name="Welti R."/>
            <person name="Goo Y.A."/>
            <person name="Leithauser B."/>
            <person name="Keller K."/>
            <person name="Cruz R."/>
            <person name="Danson M.J."/>
            <person name="Hough D.W."/>
            <person name="Maddocks D.G."/>
            <person name="Jablonski P.E."/>
            <person name="Krebs M.P."/>
            <person name="Angevine C.M."/>
            <person name="Dale H."/>
            <person name="Isenbarger T.A."/>
            <person name="Peck R.F."/>
            <person name="Pohlschroder M."/>
            <person name="Spudich J.L."/>
            <person name="Jung K.-H."/>
            <person name="Alam M."/>
            <person name="Freitas T."/>
            <person name="Hou S."/>
            <person name="Daniels C.J."/>
            <person name="Dennis P.P."/>
            <person name="Omer A.D."/>
            <person name="Ebhardt H."/>
            <person name="Lowe T.M."/>
            <person name="Liang P."/>
            <person name="Riley M."/>
            <person name="Hood L."/>
            <person name="DasSarma S."/>
        </authorList>
    </citation>
    <scope>NUCLEOTIDE SEQUENCE [LARGE SCALE GENOMIC DNA]</scope>
    <source>
        <strain>ATCC 700922 / JCM 11081 / NRC-1</strain>
    </source>
</reference>
<evidence type="ECO:0000255" key="1">
    <source>
        <dbReference type="HAMAP-Rule" id="MF_00119"/>
    </source>
</evidence>
<evidence type="ECO:0000305" key="2"/>
<organism>
    <name type="scientific">Halobacterium salinarum (strain ATCC 700922 / JCM 11081 / NRC-1)</name>
    <name type="common">Halobacterium halobium</name>
    <dbReference type="NCBI Taxonomy" id="64091"/>
    <lineage>
        <taxon>Archaea</taxon>
        <taxon>Methanobacteriati</taxon>
        <taxon>Methanobacteriota</taxon>
        <taxon>Stenosarchaea group</taxon>
        <taxon>Halobacteria</taxon>
        <taxon>Halobacteriales</taxon>
        <taxon>Halobacteriaceae</taxon>
        <taxon>Halobacterium</taxon>
        <taxon>Halobacterium salinarum NRC-34001</taxon>
    </lineage>
</organism>
<dbReference type="EC" id="3.6.5.3" evidence="1"/>
<dbReference type="EMBL" id="AB015764">
    <property type="protein sequence ID" value="BAA35082.1"/>
    <property type="molecule type" value="Genomic_DNA"/>
</dbReference>
<dbReference type="EMBL" id="AE004437">
    <property type="protein sequence ID" value="AAG20211.1"/>
    <property type="molecule type" value="Genomic_DNA"/>
</dbReference>
<dbReference type="PIR" id="G84355">
    <property type="entry name" value="G84355"/>
</dbReference>
<dbReference type="PIR" id="T43851">
    <property type="entry name" value="T43851"/>
</dbReference>
<dbReference type="RefSeq" id="WP_010903512.1">
    <property type="nucleotide sequence ID" value="NC_002607.1"/>
</dbReference>
<dbReference type="SMR" id="Q9HNK9"/>
<dbReference type="FunCoup" id="Q9HNK9">
    <property type="interactions" value="165"/>
</dbReference>
<dbReference type="STRING" id="64091.VNG_2056G"/>
<dbReference type="PaxDb" id="64091-VNG_2056G"/>
<dbReference type="KEGG" id="hal:VNG_2056G"/>
<dbReference type="PATRIC" id="fig|64091.14.peg.1568"/>
<dbReference type="HOGENOM" id="CLU_027154_0_1_2"/>
<dbReference type="InParanoid" id="Q9HNK9"/>
<dbReference type="OrthoDB" id="7798at2157"/>
<dbReference type="PhylomeDB" id="Q9HNK9"/>
<dbReference type="Proteomes" id="UP000000554">
    <property type="component" value="Chromosome"/>
</dbReference>
<dbReference type="GO" id="GO:0005525">
    <property type="term" value="F:GTP binding"/>
    <property type="evidence" value="ECO:0007669"/>
    <property type="project" value="UniProtKB-UniRule"/>
</dbReference>
<dbReference type="GO" id="GO:0003924">
    <property type="term" value="F:GTPase activity"/>
    <property type="evidence" value="ECO:0007669"/>
    <property type="project" value="InterPro"/>
</dbReference>
<dbReference type="GO" id="GO:0046872">
    <property type="term" value="F:metal ion binding"/>
    <property type="evidence" value="ECO:0007669"/>
    <property type="project" value="UniProtKB-KW"/>
</dbReference>
<dbReference type="GO" id="GO:0003746">
    <property type="term" value="F:translation elongation factor activity"/>
    <property type="evidence" value="ECO:0007669"/>
    <property type="project" value="UniProtKB-UniRule"/>
</dbReference>
<dbReference type="GO" id="GO:0003743">
    <property type="term" value="F:translation initiation factor activity"/>
    <property type="evidence" value="ECO:0000318"/>
    <property type="project" value="GO_Central"/>
</dbReference>
<dbReference type="GO" id="GO:0001731">
    <property type="term" value="P:formation of translation preinitiation complex"/>
    <property type="evidence" value="ECO:0000318"/>
    <property type="project" value="GO_Central"/>
</dbReference>
<dbReference type="CDD" id="cd01888">
    <property type="entry name" value="eIF2_gamma"/>
    <property type="match status" value="1"/>
</dbReference>
<dbReference type="CDD" id="cd15490">
    <property type="entry name" value="eIF2_gamma_III"/>
    <property type="match status" value="1"/>
</dbReference>
<dbReference type="FunFam" id="3.40.50.300:FF:000065">
    <property type="entry name" value="Eukaryotic translation initiation factor 2 subunit gamma"/>
    <property type="match status" value="1"/>
</dbReference>
<dbReference type="FunFam" id="2.40.30.10:FF:000075">
    <property type="entry name" value="Translation initiation factor 2 subunit gamma"/>
    <property type="match status" value="1"/>
</dbReference>
<dbReference type="Gene3D" id="3.40.50.300">
    <property type="entry name" value="P-loop containing nucleotide triphosphate hydrolases"/>
    <property type="match status" value="1"/>
</dbReference>
<dbReference type="Gene3D" id="2.40.30.10">
    <property type="entry name" value="Translation factors"/>
    <property type="match status" value="2"/>
</dbReference>
<dbReference type="HAMAP" id="MF_00119">
    <property type="entry name" value="eIF_2_gamma"/>
    <property type="match status" value="1"/>
</dbReference>
<dbReference type="InterPro" id="IPR050543">
    <property type="entry name" value="eIF2G"/>
</dbReference>
<dbReference type="InterPro" id="IPR015256">
    <property type="entry name" value="eIF2g_C"/>
</dbReference>
<dbReference type="InterPro" id="IPR044128">
    <property type="entry name" value="eIF2g_GTP-bd"/>
</dbReference>
<dbReference type="InterPro" id="IPR027417">
    <property type="entry name" value="P-loop_NTPase"/>
</dbReference>
<dbReference type="InterPro" id="IPR005225">
    <property type="entry name" value="Small_GTP-bd"/>
</dbReference>
<dbReference type="InterPro" id="IPR000795">
    <property type="entry name" value="T_Tr_GTP-bd_dom"/>
</dbReference>
<dbReference type="InterPro" id="IPR022424">
    <property type="entry name" value="TIF2_gsu"/>
</dbReference>
<dbReference type="InterPro" id="IPR009000">
    <property type="entry name" value="Transl_B-barrel_sf"/>
</dbReference>
<dbReference type="InterPro" id="IPR009001">
    <property type="entry name" value="Transl_elong_EF1A/Init_IF2_C"/>
</dbReference>
<dbReference type="NCBIfam" id="TIGR03680">
    <property type="entry name" value="eif2g_arch"/>
    <property type="match status" value="1"/>
</dbReference>
<dbReference type="NCBIfam" id="NF003077">
    <property type="entry name" value="PRK04000.1"/>
    <property type="match status" value="1"/>
</dbReference>
<dbReference type="NCBIfam" id="TIGR00231">
    <property type="entry name" value="small_GTP"/>
    <property type="match status" value="1"/>
</dbReference>
<dbReference type="PANTHER" id="PTHR42854">
    <property type="entry name" value="EUKARYOTIC TRANSLATION INITIATION FACTOR 2 SUBUNIT 3 FAMILY MEMBER"/>
    <property type="match status" value="1"/>
</dbReference>
<dbReference type="PANTHER" id="PTHR42854:SF3">
    <property type="entry name" value="EUKARYOTIC TRANSLATION INITIATION FACTOR 2 SUBUNIT 3-RELATED"/>
    <property type="match status" value="1"/>
</dbReference>
<dbReference type="Pfam" id="PF09173">
    <property type="entry name" value="eIF2_C"/>
    <property type="match status" value="1"/>
</dbReference>
<dbReference type="Pfam" id="PF00009">
    <property type="entry name" value="GTP_EFTU"/>
    <property type="match status" value="1"/>
</dbReference>
<dbReference type="PRINTS" id="PR00315">
    <property type="entry name" value="ELONGATNFCT"/>
</dbReference>
<dbReference type="SUPFAM" id="SSF50465">
    <property type="entry name" value="EF-Tu/eEF-1alpha/eIF2-gamma C-terminal domain"/>
    <property type="match status" value="1"/>
</dbReference>
<dbReference type="SUPFAM" id="SSF52540">
    <property type="entry name" value="P-loop containing nucleoside triphosphate hydrolases"/>
    <property type="match status" value="1"/>
</dbReference>
<dbReference type="SUPFAM" id="SSF50447">
    <property type="entry name" value="Translation proteins"/>
    <property type="match status" value="1"/>
</dbReference>
<dbReference type="PROSITE" id="PS51722">
    <property type="entry name" value="G_TR_2"/>
    <property type="match status" value="1"/>
</dbReference>
<keyword id="KW-0342">GTP-binding</keyword>
<keyword id="KW-0378">Hydrolase</keyword>
<keyword id="KW-0396">Initiation factor</keyword>
<keyword id="KW-0460">Magnesium</keyword>
<keyword id="KW-0479">Metal-binding</keyword>
<keyword id="KW-0547">Nucleotide-binding</keyword>
<keyword id="KW-0648">Protein biosynthesis</keyword>
<keyword id="KW-1185">Reference proteome</keyword>
<comment type="function">
    <text evidence="1">eIF-2 functions in the early steps of protein synthesis by forming a ternary complex with GTP and initiator tRNA.</text>
</comment>
<comment type="catalytic activity">
    <reaction evidence="1">
        <text>GTP + H2O = GDP + phosphate + H(+)</text>
        <dbReference type="Rhea" id="RHEA:19669"/>
        <dbReference type="ChEBI" id="CHEBI:15377"/>
        <dbReference type="ChEBI" id="CHEBI:15378"/>
        <dbReference type="ChEBI" id="CHEBI:37565"/>
        <dbReference type="ChEBI" id="CHEBI:43474"/>
        <dbReference type="ChEBI" id="CHEBI:58189"/>
        <dbReference type="EC" id="3.6.5.3"/>
    </reaction>
</comment>
<comment type="cofactor">
    <cofactor evidence="1">
        <name>Mg(2+)</name>
        <dbReference type="ChEBI" id="CHEBI:18420"/>
    </cofactor>
</comment>
<comment type="subunit">
    <text evidence="1">Heterotrimer composed of an alpha, a beta and a gamma chain.</text>
</comment>
<comment type="similarity">
    <text evidence="1">Belongs to the TRAFAC class translation factor GTPase superfamily. Classic translation factor GTPase family. EIF2G subfamily.</text>
</comment>
<gene>
    <name evidence="1" type="primary">eif2g</name>
    <name type="ordered locus">VNG_2056G</name>
</gene>
<proteinExistence type="inferred from homology"/>
<sequence length="414" mass="43781">MADEHRQPEVNIGLVGHVDHGKTTLVRALSGEWTDQHSEEMKRGISIRLGYADATLRRCPDCDEPECYTVAETCPEHDTATEIERTVSFVDAPGHETLMATMLSGAALMDGAVLVVGANEPVPQPQTEEHLMALDIIGIENIVIAQNKVDLVDAEEARQNYEEIQAFVEGTVAEDAPVVPVSAEQEINVDLVIDALQTEIATPDRDPSADPLLYAARSFDINRPGTEWGGLLGGVIGGSLVDGELEAGDELELRPGREVEEGGKTEWRPVTTDVRSLQAGGEDVDSASPGGLLGVGTGLDPSLTKGDALAGQVAGPPGSLPPTWESFEMDVDLLERLVGAADGEQIDDISTGEPLMLTVGTATTVGSVTSARDGECEVALKRPVCAPAGAKIAINRRVGARWRLIGVGTLTESE</sequence>
<name>IF2G_HALSA</name>
<protein>
    <recommendedName>
        <fullName evidence="1">Translation initiation factor 2 subunit gamma</fullName>
        <ecNumber evidence="1">3.6.5.3</ecNumber>
    </recommendedName>
    <alternativeName>
        <fullName evidence="1">aIF2-gamma</fullName>
    </alternativeName>
    <alternativeName>
        <fullName evidence="1">eIF-2-gamma</fullName>
    </alternativeName>
</protein>
<accession>Q9HNK9</accession>
<accession>O93626</accession>